<keyword id="KW-0007">Acetylation</keyword>
<keyword id="KW-0963">Cytoplasm</keyword>
<keyword id="KW-0333">Golgi apparatus</keyword>
<keyword id="KW-0472">Membrane</keyword>
<keyword id="KW-0653">Protein transport</keyword>
<keyword id="KW-1185">Reference proteome</keyword>
<keyword id="KW-0677">Repeat</keyword>
<keyword id="KW-0813">Transport</keyword>
<protein>
    <recommendedName>
        <fullName>AP-3 complex subunit delta</fullName>
    </recommendedName>
    <alternativeName>
        <fullName>Adaptor-related protein complex 3 subunit delta</fullName>
    </alternativeName>
    <alternativeName>
        <fullName>Delta-adaptin</fullName>
        <shortName>At-d-Ad</shortName>
        <shortName>At-delta-Ad</shortName>
    </alternativeName>
    <alternativeName>
        <fullName>Protein-affected trafficking 4</fullName>
    </alternativeName>
</protein>
<sequence>MSSSSTSIMDNLFQRSLEDLIKGFRLQLLGESNFISRAVEEIRREIKATDLSTKSTALHKLSYLAALHGVDMSWAAFHAVEVVSSSRFQHKRIGYQAITQSFNDQTSVMLLITNQVRKDLNSANEYEVSLALECLSRIGTHDLARDLTPEVFTLLGSSKSFVKKKAIGVVLRVFEKYHDAVKVCFKRLVENLETSDPQILSAVVGVFCELATKDPQSCLPLAPEFYKVLVDSRNNWVLIKVLKIFAKLALIEPRLGKKVAEPICEHMRRTVAKSLVFECVRTVVSSLSDNEAAVKLAVAKIREFLVEDDPNLKYLGLNALSIVAPKHLWAVLENKEVVVKAMSDEDPNVKLEALHLLMAMVNEDNVSEISRILMNYALKSDPLFCNEIIFSVLSACSRNAYEIIVDFDWYLSLLGEMARIPHCQRGEDIEHQLIDIGMRVRDARPQLVRVSWALLIDPALLGNLFLHPILSAAAWVSGEYVEFSKNPYETVEALLQPRTDLLPPSIKAIYIHSAFKVLVFCLGSYFSSQEPTSSSLAQESSSGSLLVNVFTHESILSLVNVIELGLGPLSGYHDVEVQERAKNVLGYISVIKQEIAEQLNLQDNETEASRVTAFMEDVFSEEFGPISATAQEKVCVPDGLELKENLGDLEEICGEHLKPVESDSVSYTDKISFSVSKLRIRDQQEATSSSSPPHEASSLLAEHRKRHGMYYLTSQKEDQDSNGTSSDYPLANELANEISQDSFNPKRKPNQSKPRPVVVKLDDGDESRITPQAKTNIQTANDDESLSRAIQSALLVKNKGKEKDRYEGNPNSGQQEKEESSRIENHQNSEKKKKKKKKKKGEGSSKHKSRRQNEVASASEQVIIPDFLL</sequence>
<comment type="function">
    <text evidence="5">Part of the AP-3 complex, an adaptor-related complex which seems to be clathrin-associated. The complex is associated with the Golgi region as well as more peripheral structures. It facilitates the budding of vesicles from the Golgi membrane and may be directly involved in trafficking to the vacuole. It also function in maintaining the identity of lytic vacuoles and in regulating the transition between storage and lytic vacuoles.</text>
</comment>
<comment type="subunit">
    <text>Adaptor protein complex 3 (AP-3) is a heterotetramer composed of two large adaptins (delta-type subunit and beta-type subunit), a medium adaptin (mu-type subunit) and a small adaptin (sigma-type subunit). Binds to EPSIN2.</text>
</comment>
<comment type="subcellular location">
    <subcellularLocation>
        <location evidence="1">Cytoplasm</location>
    </subcellularLocation>
    <subcellularLocation>
        <location evidence="1">Golgi apparatus membrane</location>
        <topology evidence="1">Peripheral membrane protein</topology>
        <orientation evidence="1">Cytoplasmic side</orientation>
    </subcellularLocation>
    <text evidence="3">Also localizes to a novel cellular compartment, the 'delta compartment', characterized by colocalization of EPSIN2 and DELTA-ADR.</text>
</comment>
<comment type="disruption phenotype">
    <text evidence="4 5">No obvious phenotype except defective lytic vacuoles with altered morphology and accumulation of proteins.</text>
</comment>
<comment type="similarity">
    <text evidence="6">Belongs to the adaptor complexes large subunit family.</text>
</comment>
<evidence type="ECO:0000250" key="1"/>
<evidence type="ECO:0000256" key="2">
    <source>
        <dbReference type="SAM" id="MobiDB-lite"/>
    </source>
</evidence>
<evidence type="ECO:0000269" key="3">
    <source>
    </source>
</evidence>
<evidence type="ECO:0000269" key="4">
    <source>
    </source>
</evidence>
<evidence type="ECO:0000269" key="5">
    <source>
    </source>
</evidence>
<evidence type="ECO:0000305" key="6"/>
<evidence type="ECO:0007744" key="7">
    <source>
    </source>
</evidence>
<proteinExistence type="evidence at protein level"/>
<organism>
    <name type="scientific">Arabidopsis thaliana</name>
    <name type="common">Mouse-ear cress</name>
    <dbReference type="NCBI Taxonomy" id="3702"/>
    <lineage>
        <taxon>Eukaryota</taxon>
        <taxon>Viridiplantae</taxon>
        <taxon>Streptophyta</taxon>
        <taxon>Embryophyta</taxon>
        <taxon>Tracheophyta</taxon>
        <taxon>Spermatophyta</taxon>
        <taxon>Magnoliopsida</taxon>
        <taxon>eudicotyledons</taxon>
        <taxon>Gunneridae</taxon>
        <taxon>Pentapetalae</taxon>
        <taxon>rosids</taxon>
        <taxon>malvids</taxon>
        <taxon>Brassicales</taxon>
        <taxon>Brassicaceae</taxon>
        <taxon>Camelineae</taxon>
        <taxon>Arabidopsis</taxon>
    </lineage>
</organism>
<gene>
    <name type="primary">DELTA-ADR</name>
    <name type="synonym">PAT4</name>
    <name type="ordered locus">At1g48760</name>
    <name type="ORF">F11I4.7</name>
</gene>
<dbReference type="EMBL" id="AC073555">
    <property type="protein sequence ID" value="AAG60121.1"/>
    <property type="molecule type" value="Genomic_DNA"/>
</dbReference>
<dbReference type="EMBL" id="CP002684">
    <property type="protein sequence ID" value="AEE32345.1"/>
    <property type="molecule type" value="Genomic_DNA"/>
</dbReference>
<dbReference type="EMBL" id="CP002684">
    <property type="protein sequence ID" value="AEE32346.1"/>
    <property type="molecule type" value="Genomic_DNA"/>
</dbReference>
<dbReference type="EMBL" id="CP002684">
    <property type="protein sequence ID" value="AEE32347.1"/>
    <property type="molecule type" value="Genomic_DNA"/>
</dbReference>
<dbReference type="EMBL" id="AY056123">
    <property type="protein sequence ID" value="AAL07009.1"/>
    <property type="molecule type" value="mRNA"/>
</dbReference>
<dbReference type="RefSeq" id="NP_001031156.1">
    <property type="nucleotide sequence ID" value="NM_001036079.1"/>
</dbReference>
<dbReference type="RefSeq" id="NP_175308.1">
    <property type="nucleotide sequence ID" value="NM_103771.2"/>
</dbReference>
<dbReference type="RefSeq" id="NP_849785.1">
    <property type="nucleotide sequence ID" value="NM_179454.1"/>
</dbReference>
<dbReference type="SMR" id="Q9C744"/>
<dbReference type="BioGRID" id="26523">
    <property type="interactions" value="2"/>
</dbReference>
<dbReference type="FunCoup" id="Q9C744">
    <property type="interactions" value="4216"/>
</dbReference>
<dbReference type="IntAct" id="Q9C744">
    <property type="interactions" value="1"/>
</dbReference>
<dbReference type="STRING" id="3702.Q9C744"/>
<dbReference type="iPTMnet" id="Q9C744"/>
<dbReference type="PaxDb" id="3702-AT1G48760.2"/>
<dbReference type="ProteomicsDB" id="244405"/>
<dbReference type="EnsemblPlants" id="AT1G48760.1">
    <property type="protein sequence ID" value="AT1G48760.1"/>
    <property type="gene ID" value="AT1G48760"/>
</dbReference>
<dbReference type="EnsemblPlants" id="AT1G48760.2">
    <property type="protein sequence ID" value="AT1G48760.2"/>
    <property type="gene ID" value="AT1G48760"/>
</dbReference>
<dbReference type="EnsemblPlants" id="AT1G48760.3">
    <property type="protein sequence ID" value="AT1G48760.3"/>
    <property type="gene ID" value="AT1G48760"/>
</dbReference>
<dbReference type="GeneID" id="841298"/>
<dbReference type="Gramene" id="AT1G48760.1">
    <property type="protein sequence ID" value="AT1G48760.1"/>
    <property type="gene ID" value="AT1G48760"/>
</dbReference>
<dbReference type="Gramene" id="AT1G48760.2">
    <property type="protein sequence ID" value="AT1G48760.2"/>
    <property type="gene ID" value="AT1G48760"/>
</dbReference>
<dbReference type="Gramene" id="AT1G48760.3">
    <property type="protein sequence ID" value="AT1G48760.3"/>
    <property type="gene ID" value="AT1G48760"/>
</dbReference>
<dbReference type="KEGG" id="ath:AT1G48760"/>
<dbReference type="Araport" id="AT1G48760"/>
<dbReference type="TAIR" id="AT1G48760">
    <property type="gene designation" value="DELTA-ADR"/>
</dbReference>
<dbReference type="eggNOG" id="KOG1059">
    <property type="taxonomic scope" value="Eukaryota"/>
</dbReference>
<dbReference type="HOGENOM" id="CLU_001908_4_0_1"/>
<dbReference type="InParanoid" id="Q9C744"/>
<dbReference type="OMA" id="SMNAFTH"/>
<dbReference type="PhylomeDB" id="Q9C744"/>
<dbReference type="BRENDA" id="2.3.1.225">
    <property type="organism ID" value="399"/>
</dbReference>
<dbReference type="PRO" id="PR:Q9C744"/>
<dbReference type="Proteomes" id="UP000006548">
    <property type="component" value="Chromosome 1"/>
</dbReference>
<dbReference type="ExpressionAtlas" id="Q9C744">
    <property type="expression patterns" value="baseline and differential"/>
</dbReference>
<dbReference type="GO" id="GO:0030123">
    <property type="term" value="C:AP-3 adaptor complex"/>
    <property type="evidence" value="ECO:0007669"/>
    <property type="project" value="InterPro"/>
</dbReference>
<dbReference type="GO" id="GO:0005794">
    <property type="term" value="C:Golgi apparatus"/>
    <property type="evidence" value="ECO:0000314"/>
    <property type="project" value="TAIR"/>
</dbReference>
<dbReference type="GO" id="GO:0000139">
    <property type="term" value="C:Golgi membrane"/>
    <property type="evidence" value="ECO:0007669"/>
    <property type="project" value="UniProtKB-SubCell"/>
</dbReference>
<dbReference type="GO" id="GO:0005634">
    <property type="term" value="C:nucleus"/>
    <property type="evidence" value="ECO:0007005"/>
    <property type="project" value="TAIR"/>
</dbReference>
<dbReference type="GO" id="GO:0007032">
    <property type="term" value="P:endosome organization"/>
    <property type="evidence" value="ECO:0000315"/>
    <property type="project" value="TAIR"/>
</dbReference>
<dbReference type="GO" id="GO:0006886">
    <property type="term" value="P:intracellular protein transport"/>
    <property type="evidence" value="ECO:0000315"/>
    <property type="project" value="TAIR"/>
</dbReference>
<dbReference type="GO" id="GO:0080171">
    <property type="term" value="P:lytic vacuole organization"/>
    <property type="evidence" value="ECO:0000315"/>
    <property type="project" value="TAIR"/>
</dbReference>
<dbReference type="GO" id="GO:1990019">
    <property type="term" value="P:protein storage vacuole organization"/>
    <property type="evidence" value="ECO:0000315"/>
    <property type="project" value="TAIR"/>
</dbReference>
<dbReference type="GO" id="GO:0006903">
    <property type="term" value="P:vesicle targeting"/>
    <property type="evidence" value="ECO:0000270"/>
    <property type="project" value="TAIR"/>
</dbReference>
<dbReference type="FunFam" id="1.25.10.10:FF:000360">
    <property type="entry name" value="AP-3 complex subunit delta"/>
    <property type="match status" value="1"/>
</dbReference>
<dbReference type="Gene3D" id="1.25.10.10">
    <property type="entry name" value="Leucine-rich Repeat Variant"/>
    <property type="match status" value="1"/>
</dbReference>
<dbReference type="InterPro" id="IPR017105">
    <property type="entry name" value="AP3_complex_dsu"/>
</dbReference>
<dbReference type="InterPro" id="IPR011989">
    <property type="entry name" value="ARM-like"/>
</dbReference>
<dbReference type="InterPro" id="IPR016024">
    <property type="entry name" value="ARM-type_fold"/>
</dbReference>
<dbReference type="InterPro" id="IPR002553">
    <property type="entry name" value="Clathrin/coatomer_adapt-like_N"/>
</dbReference>
<dbReference type="PANTHER" id="PTHR22781:SF12">
    <property type="entry name" value="AP-3 COMPLEX SUBUNIT DELTA-1"/>
    <property type="match status" value="1"/>
</dbReference>
<dbReference type="PANTHER" id="PTHR22781">
    <property type="entry name" value="DELTA ADAPTIN-RELATED"/>
    <property type="match status" value="1"/>
</dbReference>
<dbReference type="Pfam" id="PF01602">
    <property type="entry name" value="Adaptin_N"/>
    <property type="match status" value="1"/>
</dbReference>
<dbReference type="PIRSF" id="PIRSF037092">
    <property type="entry name" value="AP3_complex_delta"/>
    <property type="match status" value="1"/>
</dbReference>
<dbReference type="SUPFAM" id="SSF48371">
    <property type="entry name" value="ARM repeat"/>
    <property type="match status" value="1"/>
</dbReference>
<feature type="initiator methionine" description="Removed" evidence="7">
    <location>
        <position position="1"/>
    </location>
</feature>
<feature type="chain" id="PRO_0000397854" description="AP-3 complex subunit delta">
    <location>
        <begin position="2"/>
        <end position="869"/>
    </location>
</feature>
<feature type="repeat" description="HEAT 1">
    <location>
        <begin position="33"/>
        <end position="70"/>
    </location>
</feature>
<feature type="repeat" description="HEAT 2">
    <location>
        <begin position="107"/>
        <end position="142"/>
    </location>
</feature>
<feature type="repeat" description="HEAT 3">
    <location>
        <begin position="143"/>
        <end position="179"/>
    </location>
</feature>
<feature type="repeat" description="HEAT 4">
    <location>
        <begin position="180"/>
        <end position="216"/>
    </location>
</feature>
<feature type="repeat" description="HEAT 5">
    <location>
        <begin position="218"/>
        <end position="254"/>
    </location>
</feature>
<feature type="repeat" description="HEAT 6">
    <location>
        <begin position="292"/>
        <end position="329"/>
    </location>
</feature>
<feature type="repeat" description="HEAT 7">
    <location>
        <begin position="330"/>
        <end position="366"/>
    </location>
</feature>
<feature type="region of interest" description="Disordered" evidence="2">
    <location>
        <begin position="738"/>
        <end position="869"/>
    </location>
</feature>
<feature type="compositionally biased region" description="Polar residues" evidence="2">
    <location>
        <begin position="769"/>
        <end position="780"/>
    </location>
</feature>
<feature type="compositionally biased region" description="Basic and acidic residues" evidence="2">
    <location>
        <begin position="815"/>
        <end position="830"/>
    </location>
</feature>
<feature type="compositionally biased region" description="Basic residues" evidence="2">
    <location>
        <begin position="831"/>
        <end position="850"/>
    </location>
</feature>
<feature type="modified residue" description="N-acetylserine" evidence="7">
    <location>
        <position position="2"/>
    </location>
</feature>
<name>AP3D_ARATH</name>
<accession>Q9C744</accession>
<reference key="1">
    <citation type="journal article" date="2000" name="Nature">
        <title>Sequence and analysis of chromosome 1 of the plant Arabidopsis thaliana.</title>
        <authorList>
            <person name="Theologis A."/>
            <person name="Ecker J.R."/>
            <person name="Palm C.J."/>
            <person name="Federspiel N.A."/>
            <person name="Kaul S."/>
            <person name="White O."/>
            <person name="Alonso J."/>
            <person name="Altafi H."/>
            <person name="Araujo R."/>
            <person name="Bowman C.L."/>
            <person name="Brooks S.Y."/>
            <person name="Buehler E."/>
            <person name="Chan A."/>
            <person name="Chao Q."/>
            <person name="Chen H."/>
            <person name="Cheuk R.F."/>
            <person name="Chin C.W."/>
            <person name="Chung M.K."/>
            <person name="Conn L."/>
            <person name="Conway A.B."/>
            <person name="Conway A.R."/>
            <person name="Creasy T.H."/>
            <person name="Dewar K."/>
            <person name="Dunn P."/>
            <person name="Etgu P."/>
            <person name="Feldblyum T.V."/>
            <person name="Feng J.-D."/>
            <person name="Fong B."/>
            <person name="Fujii C.Y."/>
            <person name="Gill J.E."/>
            <person name="Goldsmith A.D."/>
            <person name="Haas B."/>
            <person name="Hansen N.F."/>
            <person name="Hughes B."/>
            <person name="Huizar L."/>
            <person name="Hunter J.L."/>
            <person name="Jenkins J."/>
            <person name="Johnson-Hopson C."/>
            <person name="Khan S."/>
            <person name="Khaykin E."/>
            <person name="Kim C.J."/>
            <person name="Koo H.L."/>
            <person name="Kremenetskaia I."/>
            <person name="Kurtz D.B."/>
            <person name="Kwan A."/>
            <person name="Lam B."/>
            <person name="Langin-Hooper S."/>
            <person name="Lee A."/>
            <person name="Lee J.M."/>
            <person name="Lenz C.A."/>
            <person name="Li J.H."/>
            <person name="Li Y.-P."/>
            <person name="Lin X."/>
            <person name="Liu S.X."/>
            <person name="Liu Z.A."/>
            <person name="Luros J.S."/>
            <person name="Maiti R."/>
            <person name="Marziali A."/>
            <person name="Militscher J."/>
            <person name="Miranda M."/>
            <person name="Nguyen M."/>
            <person name="Nierman W.C."/>
            <person name="Osborne B.I."/>
            <person name="Pai G."/>
            <person name="Peterson J."/>
            <person name="Pham P.K."/>
            <person name="Rizzo M."/>
            <person name="Rooney T."/>
            <person name="Rowley D."/>
            <person name="Sakano H."/>
            <person name="Salzberg S.L."/>
            <person name="Schwartz J.R."/>
            <person name="Shinn P."/>
            <person name="Southwick A.M."/>
            <person name="Sun H."/>
            <person name="Tallon L.J."/>
            <person name="Tambunga G."/>
            <person name="Toriumi M.J."/>
            <person name="Town C.D."/>
            <person name="Utterback T."/>
            <person name="Van Aken S."/>
            <person name="Vaysberg M."/>
            <person name="Vysotskaia V.S."/>
            <person name="Walker M."/>
            <person name="Wu D."/>
            <person name="Yu G."/>
            <person name="Fraser C.M."/>
            <person name="Venter J.C."/>
            <person name="Davis R.W."/>
        </authorList>
    </citation>
    <scope>NUCLEOTIDE SEQUENCE [LARGE SCALE GENOMIC DNA]</scope>
    <source>
        <strain>cv. Columbia</strain>
    </source>
</reference>
<reference key="2">
    <citation type="journal article" date="2017" name="Plant J.">
        <title>Araport11: a complete reannotation of the Arabidopsis thaliana reference genome.</title>
        <authorList>
            <person name="Cheng C.Y."/>
            <person name="Krishnakumar V."/>
            <person name="Chan A.P."/>
            <person name="Thibaud-Nissen F."/>
            <person name="Schobel S."/>
            <person name="Town C.D."/>
        </authorList>
    </citation>
    <scope>GENOME REANNOTATION</scope>
    <source>
        <strain>cv. Columbia</strain>
    </source>
</reference>
<reference key="3">
    <citation type="journal article" date="2003" name="Science">
        <title>Empirical analysis of transcriptional activity in the Arabidopsis genome.</title>
        <authorList>
            <person name="Yamada K."/>
            <person name="Lim J."/>
            <person name="Dale J.M."/>
            <person name="Chen H."/>
            <person name="Shinn P."/>
            <person name="Palm C.J."/>
            <person name="Southwick A.M."/>
            <person name="Wu H.C."/>
            <person name="Kim C.J."/>
            <person name="Nguyen M."/>
            <person name="Pham P.K."/>
            <person name="Cheuk R.F."/>
            <person name="Karlin-Newmann G."/>
            <person name="Liu S.X."/>
            <person name="Lam B."/>
            <person name="Sakano H."/>
            <person name="Wu T."/>
            <person name="Yu G."/>
            <person name="Miranda M."/>
            <person name="Quach H.L."/>
            <person name="Tripp M."/>
            <person name="Chang C.H."/>
            <person name="Lee J.M."/>
            <person name="Toriumi M.J."/>
            <person name="Chan M.M."/>
            <person name="Tang C.C."/>
            <person name="Onodera C.S."/>
            <person name="Deng J.M."/>
            <person name="Akiyama K."/>
            <person name="Ansari Y."/>
            <person name="Arakawa T."/>
            <person name="Banh J."/>
            <person name="Banno F."/>
            <person name="Bowser L."/>
            <person name="Brooks S.Y."/>
            <person name="Carninci P."/>
            <person name="Chao Q."/>
            <person name="Choy N."/>
            <person name="Enju A."/>
            <person name="Goldsmith A.D."/>
            <person name="Gurjal M."/>
            <person name="Hansen N.F."/>
            <person name="Hayashizaki Y."/>
            <person name="Johnson-Hopson C."/>
            <person name="Hsuan V.W."/>
            <person name="Iida K."/>
            <person name="Karnes M."/>
            <person name="Khan S."/>
            <person name="Koesema E."/>
            <person name="Ishida J."/>
            <person name="Jiang P.X."/>
            <person name="Jones T."/>
            <person name="Kawai J."/>
            <person name="Kamiya A."/>
            <person name="Meyers C."/>
            <person name="Nakajima M."/>
            <person name="Narusaka M."/>
            <person name="Seki M."/>
            <person name="Sakurai T."/>
            <person name="Satou M."/>
            <person name="Tamse R."/>
            <person name="Vaysberg M."/>
            <person name="Wallender E.K."/>
            <person name="Wong C."/>
            <person name="Yamamura Y."/>
            <person name="Yuan S."/>
            <person name="Shinozaki K."/>
            <person name="Davis R.W."/>
            <person name="Theologis A."/>
            <person name="Ecker J.R."/>
        </authorList>
    </citation>
    <scope>NUCLEOTIDE SEQUENCE [LARGE SCALE MRNA]</scope>
    <source>
        <strain>cv. Columbia</strain>
    </source>
</reference>
<reference key="4">
    <citation type="journal article" date="2001" name="Mol. Biol. Cell">
        <title>Adaptins: the final recount.</title>
        <authorList>
            <person name="Boehm M."/>
            <person name="Bonifacino J.S."/>
        </authorList>
    </citation>
    <scope>GENE FAMILY</scope>
    <scope>REVIEW</scope>
</reference>
<reference key="5">
    <citation type="journal article" date="2007" name="Plant Physiol.">
        <title>EpsinR2 interacts with clathrin, adaptor protein-3, AtVTI12, and phosphatidylinositol-3-phosphate. Implications for EpsinR2 function in protein trafficking in plant cells.</title>
        <authorList>
            <person name="Lee G.-J."/>
            <person name="Kim H."/>
            <person name="Kang H."/>
            <person name="Jang M."/>
            <person name="Lee D.W."/>
            <person name="Lee S."/>
            <person name="Hwang I."/>
        </authorList>
    </citation>
    <scope>INTERACTION WITH EPSIN2</scope>
    <scope>SUBCELLULAR LOCATION</scope>
</reference>
<reference key="6">
    <citation type="journal article" date="2009" name="Plant Cell Physiol.">
        <title>ZIP genes encode proteins involved in membrane trafficking of the TGN-PVC/vacuoles.</title>
        <authorList>
            <person name="Niihama M."/>
            <person name="Takemoto N."/>
            <person name="Hashiguchi Y."/>
            <person name="Tasaka M."/>
            <person name="Morita M.T."/>
        </authorList>
    </citation>
    <scope>DISRUPTION PHENOTYPE</scope>
</reference>
<reference key="7">
    <citation type="journal article" date="2011" name="Cell Res.">
        <title>The AP-3 adaptor complex is required for vacuolar function in Arabidopsis.</title>
        <authorList>
            <person name="Zwiewka M."/>
            <person name="Feraru E."/>
            <person name="Moeller B."/>
            <person name="Hwang I."/>
            <person name="Feraru M.I."/>
            <person name="Kleine-Vehn J."/>
            <person name="Weijers D."/>
            <person name="Friml J."/>
        </authorList>
    </citation>
    <scope>MUTANT PAT4</scope>
    <scope>DISRUPTION PHENOTYPE</scope>
    <scope>FUNCTION</scope>
    <scope>COMPONENT OF THE AP-3 COMPLEX</scope>
</reference>
<reference key="8">
    <citation type="journal article" date="2012" name="Mol. Cell. Proteomics">
        <title>Comparative large-scale characterisation of plant vs. mammal proteins reveals similar and idiosyncratic N-alpha acetylation features.</title>
        <authorList>
            <person name="Bienvenut W.V."/>
            <person name="Sumpton D."/>
            <person name="Martinez A."/>
            <person name="Lilla S."/>
            <person name="Espagne C."/>
            <person name="Meinnel T."/>
            <person name="Giglione C."/>
        </authorList>
    </citation>
    <scope>ACETYLATION [LARGE SCALE ANALYSIS] AT SER-2</scope>
    <scope>CLEAVAGE OF INITIATOR METHIONINE [LARGE SCALE ANALYSIS]</scope>
    <scope>IDENTIFICATION BY MASS SPECTROMETRY [LARGE SCALE ANALYSIS]</scope>
</reference>